<protein>
    <recommendedName>
        <fullName evidence="1">Polyribonucleotide nucleotidyltransferase</fullName>
        <ecNumber evidence="1">2.7.7.8</ecNumber>
    </recommendedName>
    <alternativeName>
        <fullName evidence="1">Polynucleotide phosphorylase</fullName>
        <shortName evidence="1">PNPase</shortName>
    </alternativeName>
</protein>
<accession>A6VU33</accession>
<proteinExistence type="inferred from homology"/>
<organism>
    <name type="scientific">Marinomonas sp. (strain MWYL1)</name>
    <dbReference type="NCBI Taxonomy" id="400668"/>
    <lineage>
        <taxon>Bacteria</taxon>
        <taxon>Pseudomonadati</taxon>
        <taxon>Pseudomonadota</taxon>
        <taxon>Gammaproteobacteria</taxon>
        <taxon>Oceanospirillales</taxon>
        <taxon>Oceanospirillaceae</taxon>
        <taxon>Marinomonas</taxon>
    </lineage>
</organism>
<dbReference type="EC" id="2.7.7.8" evidence="1"/>
<dbReference type="EMBL" id="CP000749">
    <property type="protein sequence ID" value="ABR69962.1"/>
    <property type="molecule type" value="Genomic_DNA"/>
</dbReference>
<dbReference type="SMR" id="A6VU33"/>
<dbReference type="STRING" id="400668.Mmwyl1_1031"/>
<dbReference type="KEGG" id="mmw:Mmwyl1_1031"/>
<dbReference type="eggNOG" id="COG1185">
    <property type="taxonomic scope" value="Bacteria"/>
</dbReference>
<dbReference type="HOGENOM" id="CLU_004217_2_2_6"/>
<dbReference type="OrthoDB" id="9804305at2"/>
<dbReference type="GO" id="GO:0005829">
    <property type="term" value="C:cytosol"/>
    <property type="evidence" value="ECO:0007669"/>
    <property type="project" value="TreeGrafter"/>
</dbReference>
<dbReference type="GO" id="GO:0000175">
    <property type="term" value="F:3'-5'-RNA exonuclease activity"/>
    <property type="evidence" value="ECO:0007669"/>
    <property type="project" value="TreeGrafter"/>
</dbReference>
<dbReference type="GO" id="GO:0000287">
    <property type="term" value="F:magnesium ion binding"/>
    <property type="evidence" value="ECO:0007669"/>
    <property type="project" value="UniProtKB-UniRule"/>
</dbReference>
<dbReference type="GO" id="GO:0004654">
    <property type="term" value="F:polyribonucleotide nucleotidyltransferase activity"/>
    <property type="evidence" value="ECO:0007669"/>
    <property type="project" value="UniProtKB-UniRule"/>
</dbReference>
<dbReference type="GO" id="GO:0003723">
    <property type="term" value="F:RNA binding"/>
    <property type="evidence" value="ECO:0007669"/>
    <property type="project" value="UniProtKB-UniRule"/>
</dbReference>
<dbReference type="GO" id="GO:0006402">
    <property type="term" value="P:mRNA catabolic process"/>
    <property type="evidence" value="ECO:0007669"/>
    <property type="project" value="UniProtKB-UniRule"/>
</dbReference>
<dbReference type="GO" id="GO:0006396">
    <property type="term" value="P:RNA processing"/>
    <property type="evidence" value="ECO:0007669"/>
    <property type="project" value="InterPro"/>
</dbReference>
<dbReference type="CDD" id="cd02393">
    <property type="entry name" value="KH-I_PNPase"/>
    <property type="match status" value="1"/>
</dbReference>
<dbReference type="CDD" id="cd11363">
    <property type="entry name" value="RNase_PH_PNPase_1"/>
    <property type="match status" value="1"/>
</dbReference>
<dbReference type="CDD" id="cd11364">
    <property type="entry name" value="RNase_PH_PNPase_2"/>
    <property type="match status" value="1"/>
</dbReference>
<dbReference type="CDD" id="cd04472">
    <property type="entry name" value="S1_PNPase"/>
    <property type="match status" value="1"/>
</dbReference>
<dbReference type="FunFam" id="2.40.50.140:FF:000023">
    <property type="entry name" value="Polyribonucleotide nucleotidyltransferase"/>
    <property type="match status" value="1"/>
</dbReference>
<dbReference type="FunFam" id="3.30.1370.10:FF:000001">
    <property type="entry name" value="Polyribonucleotide nucleotidyltransferase"/>
    <property type="match status" value="1"/>
</dbReference>
<dbReference type="FunFam" id="3.30.230.70:FF:000001">
    <property type="entry name" value="Polyribonucleotide nucleotidyltransferase"/>
    <property type="match status" value="1"/>
</dbReference>
<dbReference type="FunFam" id="3.30.230.70:FF:000002">
    <property type="entry name" value="Polyribonucleotide nucleotidyltransferase"/>
    <property type="match status" value="1"/>
</dbReference>
<dbReference type="Gene3D" id="3.30.230.70">
    <property type="entry name" value="GHMP Kinase, N-terminal domain"/>
    <property type="match status" value="2"/>
</dbReference>
<dbReference type="Gene3D" id="3.30.1370.10">
    <property type="entry name" value="K Homology domain, type 1"/>
    <property type="match status" value="1"/>
</dbReference>
<dbReference type="Gene3D" id="2.40.50.140">
    <property type="entry name" value="Nucleic acid-binding proteins"/>
    <property type="match status" value="1"/>
</dbReference>
<dbReference type="HAMAP" id="MF_01595">
    <property type="entry name" value="PNPase"/>
    <property type="match status" value="1"/>
</dbReference>
<dbReference type="InterPro" id="IPR001247">
    <property type="entry name" value="ExoRNase_PH_dom1"/>
</dbReference>
<dbReference type="InterPro" id="IPR015847">
    <property type="entry name" value="ExoRNase_PH_dom2"/>
</dbReference>
<dbReference type="InterPro" id="IPR036345">
    <property type="entry name" value="ExoRNase_PH_dom2_sf"/>
</dbReference>
<dbReference type="InterPro" id="IPR004087">
    <property type="entry name" value="KH_dom"/>
</dbReference>
<dbReference type="InterPro" id="IPR004088">
    <property type="entry name" value="KH_dom_type_1"/>
</dbReference>
<dbReference type="InterPro" id="IPR036612">
    <property type="entry name" value="KH_dom_type_1_sf"/>
</dbReference>
<dbReference type="InterPro" id="IPR012340">
    <property type="entry name" value="NA-bd_OB-fold"/>
</dbReference>
<dbReference type="InterPro" id="IPR012162">
    <property type="entry name" value="PNPase"/>
</dbReference>
<dbReference type="InterPro" id="IPR027408">
    <property type="entry name" value="PNPase/RNase_PH_dom_sf"/>
</dbReference>
<dbReference type="InterPro" id="IPR015848">
    <property type="entry name" value="PNPase_PH_RNA-bd_bac/org-type"/>
</dbReference>
<dbReference type="InterPro" id="IPR036456">
    <property type="entry name" value="PNPase_PH_RNA-bd_sf"/>
</dbReference>
<dbReference type="InterPro" id="IPR020568">
    <property type="entry name" value="Ribosomal_Su5_D2-typ_SF"/>
</dbReference>
<dbReference type="InterPro" id="IPR003029">
    <property type="entry name" value="S1_domain"/>
</dbReference>
<dbReference type="NCBIfam" id="TIGR03591">
    <property type="entry name" value="polynuc_phos"/>
    <property type="match status" value="1"/>
</dbReference>
<dbReference type="NCBIfam" id="NF008805">
    <property type="entry name" value="PRK11824.1"/>
    <property type="match status" value="1"/>
</dbReference>
<dbReference type="PANTHER" id="PTHR11252">
    <property type="entry name" value="POLYRIBONUCLEOTIDE NUCLEOTIDYLTRANSFERASE"/>
    <property type="match status" value="1"/>
</dbReference>
<dbReference type="PANTHER" id="PTHR11252:SF0">
    <property type="entry name" value="POLYRIBONUCLEOTIDE NUCLEOTIDYLTRANSFERASE 1, MITOCHONDRIAL"/>
    <property type="match status" value="1"/>
</dbReference>
<dbReference type="Pfam" id="PF00013">
    <property type="entry name" value="KH_1"/>
    <property type="match status" value="1"/>
</dbReference>
<dbReference type="Pfam" id="PF03726">
    <property type="entry name" value="PNPase"/>
    <property type="match status" value="1"/>
</dbReference>
<dbReference type="Pfam" id="PF01138">
    <property type="entry name" value="RNase_PH"/>
    <property type="match status" value="2"/>
</dbReference>
<dbReference type="Pfam" id="PF03725">
    <property type="entry name" value="RNase_PH_C"/>
    <property type="match status" value="2"/>
</dbReference>
<dbReference type="Pfam" id="PF00575">
    <property type="entry name" value="S1"/>
    <property type="match status" value="1"/>
</dbReference>
<dbReference type="PIRSF" id="PIRSF005499">
    <property type="entry name" value="PNPase"/>
    <property type="match status" value="1"/>
</dbReference>
<dbReference type="SMART" id="SM00322">
    <property type="entry name" value="KH"/>
    <property type="match status" value="1"/>
</dbReference>
<dbReference type="SMART" id="SM00316">
    <property type="entry name" value="S1"/>
    <property type="match status" value="1"/>
</dbReference>
<dbReference type="SUPFAM" id="SSF54791">
    <property type="entry name" value="Eukaryotic type KH-domain (KH-domain type I)"/>
    <property type="match status" value="1"/>
</dbReference>
<dbReference type="SUPFAM" id="SSF50249">
    <property type="entry name" value="Nucleic acid-binding proteins"/>
    <property type="match status" value="1"/>
</dbReference>
<dbReference type="SUPFAM" id="SSF46915">
    <property type="entry name" value="Polynucleotide phosphorylase/guanosine pentaphosphate synthase (PNPase/GPSI), domain 3"/>
    <property type="match status" value="1"/>
</dbReference>
<dbReference type="SUPFAM" id="SSF55666">
    <property type="entry name" value="Ribonuclease PH domain 2-like"/>
    <property type="match status" value="2"/>
</dbReference>
<dbReference type="SUPFAM" id="SSF54211">
    <property type="entry name" value="Ribosomal protein S5 domain 2-like"/>
    <property type="match status" value="2"/>
</dbReference>
<dbReference type="PROSITE" id="PS50084">
    <property type="entry name" value="KH_TYPE_1"/>
    <property type="match status" value="1"/>
</dbReference>
<dbReference type="PROSITE" id="PS50126">
    <property type="entry name" value="S1"/>
    <property type="match status" value="1"/>
</dbReference>
<evidence type="ECO:0000255" key="1">
    <source>
        <dbReference type="HAMAP-Rule" id="MF_01595"/>
    </source>
</evidence>
<feature type="chain" id="PRO_1000087991" description="Polyribonucleotide nucleotidyltransferase">
    <location>
        <begin position="1"/>
        <end position="702"/>
    </location>
</feature>
<feature type="domain" description="KH" evidence="1">
    <location>
        <begin position="553"/>
        <end position="612"/>
    </location>
</feature>
<feature type="domain" description="S1 motif" evidence="1">
    <location>
        <begin position="622"/>
        <end position="690"/>
    </location>
</feature>
<feature type="binding site" evidence="1">
    <location>
        <position position="486"/>
    </location>
    <ligand>
        <name>Mg(2+)</name>
        <dbReference type="ChEBI" id="CHEBI:18420"/>
    </ligand>
</feature>
<feature type="binding site" evidence="1">
    <location>
        <position position="492"/>
    </location>
    <ligand>
        <name>Mg(2+)</name>
        <dbReference type="ChEBI" id="CHEBI:18420"/>
    </ligand>
</feature>
<name>PNP_MARMS</name>
<reference key="1">
    <citation type="submission" date="2007-06" db="EMBL/GenBank/DDBJ databases">
        <title>Complete sequence of Marinomonas sp. MWYL1.</title>
        <authorList>
            <consortium name="US DOE Joint Genome Institute"/>
            <person name="Copeland A."/>
            <person name="Lucas S."/>
            <person name="Lapidus A."/>
            <person name="Barry K."/>
            <person name="Glavina del Rio T."/>
            <person name="Dalin E."/>
            <person name="Tice H."/>
            <person name="Pitluck S."/>
            <person name="Kiss H."/>
            <person name="Brettin T."/>
            <person name="Bruce D."/>
            <person name="Detter J.C."/>
            <person name="Han C."/>
            <person name="Schmutz J."/>
            <person name="Larimer F."/>
            <person name="Land M."/>
            <person name="Hauser L."/>
            <person name="Kyrpides N."/>
            <person name="Kim E."/>
            <person name="Johnston A.W.B."/>
            <person name="Todd J.D."/>
            <person name="Rogers R."/>
            <person name="Wexler M."/>
            <person name="Bond P.L."/>
            <person name="Li Y."/>
            <person name="Richardson P."/>
        </authorList>
    </citation>
    <scope>NUCLEOTIDE SEQUENCE [LARGE SCALE GENOMIC DNA]</scope>
    <source>
        <strain>MWYL1</strain>
    </source>
</reference>
<sequence length="702" mass="75251">MSITTKTFQFGNDTVTLETGRIARQATGAVLCTIGDAQVLATVVGAKSAKAGQDFFPLSVHYQERAYAVGKIPGGFLKREGRPSEKETLTSRLIDRPIRPLFPKGFMNEVQVVCTVMSTNTNLDADIAAMLATSAALTISGIPFNGPIGAARVGFNDESGYVLNPSYSDLDGSLLDMVVAGTKDAVLMVESEAQELTEDEMLGAVLYAHKEMQAAISAITEFAAECAKPRWDWEAEAANVSLADALQSGYAAQIEEAYGISEKMARYAQLGVVRDAAVAALVTEEGEFTEADVTGAFSKLEKRIVRRRVIDGKPRIDGRDNKTVRPINVEVGLLSKTHGSALFTRGETQAIATCTLGTSRDSQMTDGLTGESKDSFMLHYNFPPYSVGECGRMGGVGRREIGHGRLARRGVQAVLPSEDEFPYTIRVVSEITESNGSSSMASVCGASLSMMDAGVPLKAPVAGIAMGLIKEDDGFAVLTDILGDEDHLGDMDFKVAGTAEGITALQMDIKIEGINEEIMDIALSQALEARTHILREMAKVIGYARPEVSPNAPSMATIKIDPEKIRDVIGKGGATIRSITEQTGASIDLDDDGTVRIYAADKASSDAALLKIHEITAEAEVDKLYKGKVVRLAEFGAFVNILPGKDGLVHISQIAEERIRAVTDFLSEGQEVIVKVLDVDARGRIKLSMKDVTEEEKAAYTE</sequence>
<gene>
    <name evidence="1" type="primary">pnp</name>
    <name type="ordered locus">Mmwyl1_1031</name>
</gene>
<keyword id="KW-0963">Cytoplasm</keyword>
<keyword id="KW-0460">Magnesium</keyword>
<keyword id="KW-0479">Metal-binding</keyword>
<keyword id="KW-0548">Nucleotidyltransferase</keyword>
<keyword id="KW-0694">RNA-binding</keyword>
<keyword id="KW-0808">Transferase</keyword>
<comment type="function">
    <text evidence="1">Involved in mRNA degradation. Catalyzes the phosphorolysis of single-stranded polyribonucleotides processively in the 3'- to 5'-direction.</text>
</comment>
<comment type="catalytic activity">
    <reaction evidence="1">
        <text>RNA(n+1) + phosphate = RNA(n) + a ribonucleoside 5'-diphosphate</text>
        <dbReference type="Rhea" id="RHEA:22096"/>
        <dbReference type="Rhea" id="RHEA-COMP:14527"/>
        <dbReference type="Rhea" id="RHEA-COMP:17342"/>
        <dbReference type="ChEBI" id="CHEBI:43474"/>
        <dbReference type="ChEBI" id="CHEBI:57930"/>
        <dbReference type="ChEBI" id="CHEBI:140395"/>
        <dbReference type="EC" id="2.7.7.8"/>
    </reaction>
</comment>
<comment type="cofactor">
    <cofactor evidence="1">
        <name>Mg(2+)</name>
        <dbReference type="ChEBI" id="CHEBI:18420"/>
    </cofactor>
</comment>
<comment type="subunit">
    <text evidence="1">Component of the RNA degradosome, which is a multiprotein complex involved in RNA processing and mRNA degradation.</text>
</comment>
<comment type="subcellular location">
    <subcellularLocation>
        <location evidence="1">Cytoplasm</location>
    </subcellularLocation>
</comment>
<comment type="similarity">
    <text evidence="1">Belongs to the polyribonucleotide nucleotidyltransferase family.</text>
</comment>